<accession>Q75W84</accession>
<dbReference type="EMBL" id="AB121771">
    <property type="protein sequence ID" value="BAD15088.1"/>
    <property type="molecule type" value="mRNA"/>
</dbReference>
<dbReference type="SMR" id="Q75W84"/>
<dbReference type="GlyCosmos" id="Q75W84">
    <property type="glycosylation" value="1 site, No reported glycans"/>
</dbReference>
<dbReference type="GO" id="GO:0016020">
    <property type="term" value="C:membrane"/>
    <property type="evidence" value="ECO:0000305"/>
    <property type="project" value="UniProtKB"/>
</dbReference>
<dbReference type="GO" id="GO:0005886">
    <property type="term" value="C:plasma membrane"/>
    <property type="evidence" value="ECO:0007669"/>
    <property type="project" value="UniProtKB-SubCell"/>
</dbReference>
<dbReference type="GO" id="GO:0042277">
    <property type="term" value="F:peptide binding"/>
    <property type="evidence" value="ECO:0007669"/>
    <property type="project" value="TreeGrafter"/>
</dbReference>
<dbReference type="GO" id="GO:0016500">
    <property type="term" value="F:protein-hormone receptor activity"/>
    <property type="evidence" value="ECO:0000314"/>
    <property type="project" value="UniProtKB"/>
</dbReference>
<dbReference type="GO" id="GO:0005000">
    <property type="term" value="F:vasopressin receptor activity"/>
    <property type="evidence" value="ECO:0007669"/>
    <property type="project" value="InterPro"/>
</dbReference>
<dbReference type="GO" id="GO:0032870">
    <property type="term" value="P:cellular response to hormone stimulus"/>
    <property type="evidence" value="ECO:0007669"/>
    <property type="project" value="TreeGrafter"/>
</dbReference>
<dbReference type="GO" id="GO:0018991">
    <property type="term" value="P:egg-laying behavior"/>
    <property type="evidence" value="ECO:0000304"/>
    <property type="project" value="UniProtKB"/>
</dbReference>
<dbReference type="GO" id="GO:0007186">
    <property type="term" value="P:G protein-coupled receptor signaling pathway"/>
    <property type="evidence" value="ECO:0000305"/>
    <property type="project" value="UniProtKB"/>
</dbReference>
<dbReference type="CDD" id="cd15196">
    <property type="entry name" value="7tmA_Vasopressin_Oxytocin"/>
    <property type="match status" value="1"/>
</dbReference>
<dbReference type="Gene3D" id="1.20.1070.10">
    <property type="entry name" value="Rhodopsin 7-helix transmembrane proteins"/>
    <property type="match status" value="1"/>
</dbReference>
<dbReference type="InterPro" id="IPR000276">
    <property type="entry name" value="GPCR_Rhodpsn"/>
</dbReference>
<dbReference type="InterPro" id="IPR017452">
    <property type="entry name" value="GPCR_Rhodpsn_7TM"/>
</dbReference>
<dbReference type="InterPro" id="IPR001817">
    <property type="entry name" value="Vasoprsn_rcpt"/>
</dbReference>
<dbReference type="PANTHER" id="PTHR24241:SF161">
    <property type="entry name" value="G-PROTEIN COUPLED RECEPTORS FAMILY 1 PROFILE DOMAIN-CONTAINING PROTEIN"/>
    <property type="match status" value="1"/>
</dbReference>
<dbReference type="PANTHER" id="PTHR24241">
    <property type="entry name" value="NEUROPEPTIDE RECEPTOR-RELATED G-PROTEIN COUPLED RECEPTOR"/>
    <property type="match status" value="1"/>
</dbReference>
<dbReference type="Pfam" id="PF00001">
    <property type="entry name" value="7tm_1"/>
    <property type="match status" value="1"/>
</dbReference>
<dbReference type="PRINTS" id="PR00237">
    <property type="entry name" value="GPCRRHODOPSN"/>
</dbReference>
<dbReference type="PRINTS" id="PR00896">
    <property type="entry name" value="VASOPRESSINR"/>
</dbReference>
<dbReference type="SUPFAM" id="SSF81321">
    <property type="entry name" value="Family A G protein-coupled receptor-like"/>
    <property type="match status" value="1"/>
</dbReference>
<dbReference type="PROSITE" id="PS00237">
    <property type="entry name" value="G_PROTEIN_RECEP_F1_1"/>
    <property type="match status" value="1"/>
</dbReference>
<dbReference type="PROSITE" id="PS50262">
    <property type="entry name" value="G_PROTEIN_RECEP_F1_2"/>
    <property type="match status" value="1"/>
</dbReference>
<name>ANR_EISFE</name>
<comment type="function">
    <text evidence="5">Receptor for annetocin. Activation by annetocin may induce egg-laying behavior through calcium-dependent signaling.</text>
</comment>
<comment type="subcellular location">
    <subcellularLocation>
        <location>Cell membrane</location>
        <topology>Multi-pass membrane protein</topology>
    </subcellularLocation>
</comment>
<comment type="tissue specificity">
    <text evidence="5">Nephridia in clitellum region.</text>
</comment>
<comment type="similarity">
    <text evidence="3">Belongs to the G-protein coupled receptor 1 family. Vasopressin/oxytocin receptor subfamily.</text>
</comment>
<organism>
    <name type="scientific">Eisenia fetida</name>
    <name type="common">Red wiggler worm</name>
    <dbReference type="NCBI Taxonomy" id="6396"/>
    <lineage>
        <taxon>Eukaryota</taxon>
        <taxon>Metazoa</taxon>
        <taxon>Spiralia</taxon>
        <taxon>Lophotrochozoa</taxon>
        <taxon>Annelida</taxon>
        <taxon>Clitellata</taxon>
        <taxon>Oligochaeta</taxon>
        <taxon>Crassiclitellata</taxon>
        <taxon>Lumbricina</taxon>
        <taxon>Lumbricidae</taxon>
        <taxon>Lumbricinae</taxon>
        <taxon>Eisenia</taxon>
    </lineage>
</organism>
<reference evidence="6 7" key="1">
    <citation type="journal article" date="2004" name="Biochem. J.">
        <title>Identification of a novel receptor for an invertebrate oxytocin/vasopressin superfamily peptide: molecular and functional evolution of the oxytocin/vasopressin superfamily.</title>
        <authorList>
            <person name="Kawada T."/>
            <person name="Kanda A."/>
            <person name="Minakata H."/>
            <person name="Matsushima O."/>
            <person name="Satake H."/>
        </authorList>
    </citation>
    <scope>NUCLEOTIDE SEQUENCE [MRNA]</scope>
    <scope>FUNCTION</scope>
    <scope>TISSUE SPECIFICITY</scope>
</reference>
<evidence type="ECO:0000250" key="1">
    <source>
        <dbReference type="UniProtKB" id="P02699"/>
    </source>
</evidence>
<evidence type="ECO:0000255" key="2"/>
<evidence type="ECO:0000255" key="3">
    <source>
        <dbReference type="PROSITE-ProRule" id="PRU00521"/>
    </source>
</evidence>
<evidence type="ECO:0000256" key="4">
    <source>
        <dbReference type="SAM" id="MobiDB-lite"/>
    </source>
</evidence>
<evidence type="ECO:0000269" key="5">
    <source>
    </source>
</evidence>
<evidence type="ECO:0000305" key="6"/>
<evidence type="ECO:0000312" key="7">
    <source>
        <dbReference type="EMBL" id="BAD15088.1"/>
    </source>
</evidence>
<keyword id="KW-1003">Cell membrane</keyword>
<keyword id="KW-1015">Disulfide bond</keyword>
<keyword id="KW-0297">G-protein coupled receptor</keyword>
<keyword id="KW-0325">Glycoprotein</keyword>
<keyword id="KW-0472">Membrane</keyword>
<keyword id="KW-0675">Receptor</keyword>
<keyword id="KW-0807">Transducer</keyword>
<keyword id="KW-0812">Transmembrane</keyword>
<keyword id="KW-1133">Transmembrane helix</keyword>
<gene>
    <name evidence="7" type="primary">anr</name>
</gene>
<feature type="chain" id="PRO_0000069172" description="Annetocin receptor">
    <location>
        <begin position="1"/>
        <end position="420"/>
    </location>
</feature>
<feature type="topological domain" description="Extracellular" evidence="2">
    <location>
        <begin position="1"/>
        <end position="54"/>
    </location>
</feature>
<feature type="transmembrane region" description="Helical; Name=1" evidence="2">
    <location>
        <begin position="55"/>
        <end position="75"/>
    </location>
</feature>
<feature type="topological domain" description="Cytoplasmic" evidence="2">
    <location>
        <begin position="76"/>
        <end position="83"/>
    </location>
</feature>
<feature type="transmembrane region" description="Helical; Name=2" evidence="2">
    <location>
        <begin position="84"/>
        <end position="104"/>
    </location>
</feature>
<feature type="topological domain" description="Extracellular" evidence="2">
    <location>
        <begin position="105"/>
        <end position="124"/>
    </location>
</feature>
<feature type="transmembrane region" description="Helical; Name=3" evidence="2">
    <location>
        <begin position="125"/>
        <end position="145"/>
    </location>
</feature>
<feature type="topological domain" description="Cytoplasmic" evidence="2">
    <location>
        <begin position="146"/>
        <end position="166"/>
    </location>
</feature>
<feature type="transmembrane region" description="Helical; Name=4" evidence="2">
    <location>
        <begin position="167"/>
        <end position="187"/>
    </location>
</feature>
<feature type="topological domain" description="Extracellular" evidence="2">
    <location>
        <begin position="188"/>
        <end position="212"/>
    </location>
</feature>
<feature type="transmembrane region" description="Helical; Name=5" evidence="2">
    <location>
        <begin position="213"/>
        <end position="233"/>
    </location>
</feature>
<feature type="topological domain" description="Cytoplasmic" evidence="2">
    <location>
        <begin position="234"/>
        <end position="328"/>
    </location>
</feature>
<feature type="transmembrane region" description="Helical; Name=6" evidence="2">
    <location>
        <begin position="329"/>
        <end position="349"/>
    </location>
</feature>
<feature type="topological domain" description="Extracellular" evidence="2">
    <location>
        <begin position="350"/>
        <end position="360"/>
    </location>
</feature>
<feature type="transmembrane region" description="Helical; Name=7" evidence="2">
    <location>
        <begin position="361"/>
        <end position="381"/>
    </location>
</feature>
<feature type="topological domain" description="Cytoplasmic" evidence="2">
    <location>
        <begin position="382"/>
        <end position="420"/>
    </location>
</feature>
<feature type="region of interest" description="Disordered" evidence="4">
    <location>
        <begin position="397"/>
        <end position="420"/>
    </location>
</feature>
<feature type="compositionally biased region" description="Polar residues" evidence="4">
    <location>
        <begin position="399"/>
        <end position="420"/>
    </location>
</feature>
<feature type="glycosylation site" description="N-linked (GlcNAc...) asparagine" evidence="2">
    <location>
        <position position="22"/>
    </location>
</feature>
<feature type="disulfide bond" evidence="1 3">
    <location>
        <begin position="122"/>
        <end position="201"/>
    </location>
</feature>
<sequence length="420" mass="46410">MEMDDDEAILLDDIYALASTPNQTIVTSSFPQTVSPGFLARRNEALAMVEVAVQSTILILTVVGNAAVLAMIVSLSRHKDLGRMYTMIGHLSCADLFVAIFNLLPQLLWDVTHRFRGGRVLCKLVKYVQVVAMYASAYVLMSTAVDRYTAICHPMRSHTWTSTTAHYLVIGAWVLALVFAVPQLVIFDYVEVVPGSGVYDCVDHFRPRWTLPVYITWFALAVYVIPLVVLATIYLRICVVVWKSANRKSTPMINVAARTSGATEQPSLDDASVSFNVADGGGVDLDPSGGGGSLSRHAAQLSHRQQQQQANNVVLSRAKTKTVKLTLTVVISYLVCWAPFFVSHIWSAWDPHAPFEGTEMVITLLLGSLNSCINPWIYLAFSDQLRRKVTQCCPRSWGQRPSTLSHDSTDFRSGSRPTHS</sequence>
<proteinExistence type="evidence at transcript level"/>
<protein>
    <recommendedName>
        <fullName>Annetocin receptor</fullName>
    </recommendedName>
</protein>